<comment type="function">
    <text evidence="2">Functions in cell-cell adhesion, cell migration and axon guidance. Mediates cell-cell adhesion via its interactions with ADGRL3 and probably also other latrophilins that are expressed at the surface of adjacent cells. May play a role in the migration of cortical neurons during brain development via its interaction with UNC5D. Mediates axon growth cone collapse and plays a repulsive role in neuron guidance via its interaction with UNC5D, and possibly also other UNC-5 family members. Plays a role in fibroblast growth factor-mediated signaling cascades. Required for normal organization of the cardiac basement membrane during embryogenesis, and for normal embryonic epicardium and heart morphogenesis.</text>
</comment>
<comment type="subunit">
    <text evidence="2 6">Self-associates (via leucine-rich repeats), giving rise to homooligomers. Interacts with FGFR1. Interacts with FGFR2. Interacts (via extracellular domain) with ADGRL1/LPHN1 (By similarity). Interacts (via extracellular domain) with ADGRL3 (via olfactomedin-like domain) (PubMed:22405201). Interacts (via extracellular domain) with UNC5D (via the first Ig-like domain). Can also interact (via extracellular domain) with UNC5B, but with much lower affinity. Interacts (via extracellular domain) with FN1 (By similarity).</text>
</comment>
<comment type="subcellular location">
    <subcellularLocation>
        <location evidence="2">Cell membrane</location>
        <topology evidence="2">Single-pass membrane protein</topology>
    </subcellularLocation>
    <subcellularLocation>
        <location evidence="2">Endoplasmic reticulum membrane</location>
    </subcellularLocation>
    <subcellularLocation>
        <location evidence="6">Synapse</location>
        <location evidence="6">Synaptosome</location>
    </subcellularLocation>
    <subcellularLocation>
        <location evidence="2">Cell junction</location>
        <location evidence="2">Focal adhesion</location>
    </subcellularLocation>
    <subcellularLocation>
        <location evidence="2">Secreted</location>
        <location evidence="2">Extracellular space</location>
        <location evidence="2">Extracellular matrix</location>
    </subcellularLocation>
    <subcellularLocation>
        <location evidence="2">Microsome membrane</location>
    </subcellularLocation>
    <subcellularLocation>
        <location evidence="2">Secreted</location>
    </subcellularLocation>
    <text evidence="2">Proteolytic cleavage gives rise to a shedded ectodomain.</text>
</comment>
<comment type="tissue specificity">
    <text evidence="6">Detected in brain (at protein level).</text>
</comment>
<comment type="PTM">
    <text evidence="2">N-glycosylated.</text>
</comment>
<comment type="PTM">
    <text evidence="2">Proteolytic cleavage in the juxtamembrane region gives rise to a soluble ectodomain. Cleavage is probably effected by a metalloprotease.</text>
</comment>
<keyword id="KW-0130">Cell adhesion</keyword>
<keyword id="KW-0965">Cell junction</keyword>
<keyword id="KW-1003">Cell membrane</keyword>
<keyword id="KW-0217">Developmental protein</keyword>
<keyword id="KW-1015">Disulfide bond</keyword>
<keyword id="KW-0256">Endoplasmic reticulum</keyword>
<keyword id="KW-0272">Extracellular matrix</keyword>
<keyword id="KW-0325">Glycoprotein</keyword>
<keyword id="KW-0433">Leucine-rich repeat</keyword>
<keyword id="KW-0472">Membrane</keyword>
<keyword id="KW-0492">Microsome</keyword>
<keyword id="KW-1185">Reference proteome</keyword>
<keyword id="KW-0677">Repeat</keyword>
<keyword id="KW-0964">Secreted</keyword>
<keyword id="KW-0732">Signal</keyword>
<keyword id="KW-0770">Synapse</keyword>
<keyword id="KW-0771">Synaptosome</keyword>
<keyword id="KW-0812">Transmembrane</keyword>
<keyword id="KW-1133">Transmembrane helix</keyword>
<accession>D3ZTV3</accession>
<proteinExistence type="evidence at protein level"/>
<sequence length="660" mass="73874">MGLQTAKWPSHGTFVLKFWLIMSLGLYSHVSKLLACPSVCRCDRNFVYCNERSLTSVPLGIPEGVTVLYLHNNQINNAGFPAELHNVQSVHTVYLYGNQLDEFPMNLPKNVRVLHLQENNIQTISRAALAQLLKLEELHLDDNSISTVGVEDGAFREAISLKLLFLSKNHLSSVPVGLPVDLQELRVDENRIAVISDMAFQNLTSLERLIVDGNLLTNKGIADGTFSHLTKLKEFSIVRNSLSHPPPDLPGTHLIRLYLQDNQINHIPLTAFANLRKLERLDISNNQLRMLTQGVFDHLSNLKQLTARNNPWFCDCSIKWVTEWLKYIPSSLNVRGFMCQGPEQVRGMAVRELNMNLLSCPTTTPGLPVFTPAPSTVSPTTQSPTVSVPSPSRGSVPPAPAPSKLPTIPDWDGRERATPPISERIQLSIHFVNDTSIQVSWLSLFTVMAYKLTWVKMGHSLVGGIVQERIVSGEKQHLSLVNLEPRSTYRICLVPLDAFNYRTVEDTICSEATTHASYLNNGSNTASSHEQTTSHTMGSPFLLAGLIGGAVIFVLVVLLSVFCWHMHKKGRYTSQKWKYNRGRRKDDYCEAGTKKDNSILEMTETSFQIVSLNNDQLLKGDFRLQPIYTPNGGINYTDCHIPNNMRYCNSSVPDLEHCHT</sequence>
<reference key="1">
    <citation type="journal article" date="2004" name="Nature">
        <title>Genome sequence of the Brown Norway rat yields insights into mammalian evolution.</title>
        <authorList>
            <person name="Gibbs R.A."/>
            <person name="Weinstock G.M."/>
            <person name="Metzker M.L."/>
            <person name="Muzny D.M."/>
            <person name="Sodergren E.J."/>
            <person name="Scherer S."/>
            <person name="Scott G."/>
            <person name="Steffen D."/>
            <person name="Worley K.C."/>
            <person name="Burch P.E."/>
            <person name="Okwuonu G."/>
            <person name="Hines S."/>
            <person name="Lewis L."/>
            <person name="Deramo C."/>
            <person name="Delgado O."/>
            <person name="Dugan-Rocha S."/>
            <person name="Miner G."/>
            <person name="Morgan M."/>
            <person name="Hawes A."/>
            <person name="Gill R."/>
            <person name="Holt R.A."/>
            <person name="Adams M.D."/>
            <person name="Amanatides P.G."/>
            <person name="Baden-Tillson H."/>
            <person name="Barnstead M."/>
            <person name="Chin S."/>
            <person name="Evans C.A."/>
            <person name="Ferriera S."/>
            <person name="Fosler C."/>
            <person name="Glodek A."/>
            <person name="Gu Z."/>
            <person name="Jennings D."/>
            <person name="Kraft C.L."/>
            <person name="Nguyen T."/>
            <person name="Pfannkoch C.M."/>
            <person name="Sitter C."/>
            <person name="Sutton G.G."/>
            <person name="Venter J.C."/>
            <person name="Woodage T."/>
            <person name="Smith D."/>
            <person name="Lee H.-M."/>
            <person name="Gustafson E."/>
            <person name="Cahill P."/>
            <person name="Kana A."/>
            <person name="Doucette-Stamm L."/>
            <person name="Weinstock K."/>
            <person name="Fechtel K."/>
            <person name="Weiss R.B."/>
            <person name="Dunn D.M."/>
            <person name="Green E.D."/>
            <person name="Blakesley R.W."/>
            <person name="Bouffard G.G."/>
            <person name="De Jong P.J."/>
            <person name="Osoegawa K."/>
            <person name="Zhu B."/>
            <person name="Marra M."/>
            <person name="Schein J."/>
            <person name="Bosdet I."/>
            <person name="Fjell C."/>
            <person name="Jones S."/>
            <person name="Krzywinski M."/>
            <person name="Mathewson C."/>
            <person name="Siddiqui A."/>
            <person name="Wye N."/>
            <person name="McPherson J."/>
            <person name="Zhao S."/>
            <person name="Fraser C.M."/>
            <person name="Shetty J."/>
            <person name="Shatsman S."/>
            <person name="Geer K."/>
            <person name="Chen Y."/>
            <person name="Abramzon S."/>
            <person name="Nierman W.C."/>
            <person name="Havlak P.H."/>
            <person name="Chen R."/>
            <person name="Durbin K.J."/>
            <person name="Egan A."/>
            <person name="Ren Y."/>
            <person name="Song X.-Z."/>
            <person name="Li B."/>
            <person name="Liu Y."/>
            <person name="Qin X."/>
            <person name="Cawley S."/>
            <person name="Cooney A.J."/>
            <person name="D'Souza L.M."/>
            <person name="Martin K."/>
            <person name="Wu J.Q."/>
            <person name="Gonzalez-Garay M.L."/>
            <person name="Jackson A.R."/>
            <person name="Kalafus K.J."/>
            <person name="McLeod M.P."/>
            <person name="Milosavljevic A."/>
            <person name="Virk D."/>
            <person name="Volkov A."/>
            <person name="Wheeler D.A."/>
            <person name="Zhang Z."/>
            <person name="Bailey J.A."/>
            <person name="Eichler E.E."/>
            <person name="Tuzun E."/>
            <person name="Birney E."/>
            <person name="Mongin E."/>
            <person name="Ureta-Vidal A."/>
            <person name="Woodwark C."/>
            <person name="Zdobnov E."/>
            <person name="Bork P."/>
            <person name="Suyama M."/>
            <person name="Torrents D."/>
            <person name="Alexandersson M."/>
            <person name="Trask B.J."/>
            <person name="Young J.M."/>
            <person name="Huang H."/>
            <person name="Wang H."/>
            <person name="Xing H."/>
            <person name="Daniels S."/>
            <person name="Gietzen D."/>
            <person name="Schmidt J."/>
            <person name="Stevens K."/>
            <person name="Vitt U."/>
            <person name="Wingrove J."/>
            <person name="Camara F."/>
            <person name="Mar Alba M."/>
            <person name="Abril J.F."/>
            <person name="Guigo R."/>
            <person name="Smit A."/>
            <person name="Dubchak I."/>
            <person name="Rubin E.M."/>
            <person name="Couronne O."/>
            <person name="Poliakov A."/>
            <person name="Huebner N."/>
            <person name="Ganten D."/>
            <person name="Goesele C."/>
            <person name="Hummel O."/>
            <person name="Kreitler T."/>
            <person name="Lee Y.-A."/>
            <person name="Monti J."/>
            <person name="Schulz H."/>
            <person name="Zimdahl H."/>
            <person name="Himmelbauer H."/>
            <person name="Lehrach H."/>
            <person name="Jacob H.J."/>
            <person name="Bromberg S."/>
            <person name="Gullings-Handley J."/>
            <person name="Jensen-Seaman M.I."/>
            <person name="Kwitek A.E."/>
            <person name="Lazar J."/>
            <person name="Pasko D."/>
            <person name="Tonellato P.J."/>
            <person name="Twigger S."/>
            <person name="Ponting C.P."/>
            <person name="Duarte J.M."/>
            <person name="Rice S."/>
            <person name="Goodstadt L."/>
            <person name="Beatson S.A."/>
            <person name="Emes R.D."/>
            <person name="Winter E.E."/>
            <person name="Webber C."/>
            <person name="Brandt P."/>
            <person name="Nyakatura G."/>
            <person name="Adetobi M."/>
            <person name="Chiaromonte F."/>
            <person name="Elnitski L."/>
            <person name="Eswara P."/>
            <person name="Hardison R.C."/>
            <person name="Hou M."/>
            <person name="Kolbe D."/>
            <person name="Makova K."/>
            <person name="Miller W."/>
            <person name="Nekrutenko A."/>
            <person name="Riemer C."/>
            <person name="Schwartz S."/>
            <person name="Taylor J."/>
            <person name="Yang S."/>
            <person name="Zhang Y."/>
            <person name="Lindpaintner K."/>
            <person name="Andrews T.D."/>
            <person name="Caccamo M."/>
            <person name="Clamp M."/>
            <person name="Clarke L."/>
            <person name="Curwen V."/>
            <person name="Durbin R.M."/>
            <person name="Eyras E."/>
            <person name="Searle S.M."/>
            <person name="Cooper G.M."/>
            <person name="Batzoglou S."/>
            <person name="Brudno M."/>
            <person name="Sidow A."/>
            <person name="Stone E.A."/>
            <person name="Payseur B.A."/>
            <person name="Bourque G."/>
            <person name="Lopez-Otin C."/>
            <person name="Puente X.S."/>
            <person name="Chakrabarti K."/>
            <person name="Chatterji S."/>
            <person name="Dewey C."/>
            <person name="Pachter L."/>
            <person name="Bray N."/>
            <person name="Yap V.B."/>
            <person name="Caspi A."/>
            <person name="Tesler G."/>
            <person name="Pevzner P.A."/>
            <person name="Haussler D."/>
            <person name="Roskin K.M."/>
            <person name="Baertsch R."/>
            <person name="Clawson H."/>
            <person name="Furey T.S."/>
            <person name="Hinrichs A.S."/>
            <person name="Karolchik D."/>
            <person name="Kent W.J."/>
            <person name="Rosenbloom K.R."/>
            <person name="Trumbower H."/>
            <person name="Weirauch M."/>
            <person name="Cooper D.N."/>
            <person name="Stenson P.D."/>
            <person name="Ma B."/>
            <person name="Brent M."/>
            <person name="Arumugam M."/>
            <person name="Shteynberg D."/>
            <person name="Copley R.R."/>
            <person name="Taylor M.S."/>
            <person name="Riethman H."/>
            <person name="Mudunuri U."/>
            <person name="Peterson J."/>
            <person name="Guyer M."/>
            <person name="Felsenfeld A."/>
            <person name="Old S."/>
            <person name="Mockrin S."/>
            <person name="Collins F.S."/>
        </authorList>
    </citation>
    <scope>NUCLEOTIDE SEQUENCE [LARGE SCALE GENOMIC DNA]</scope>
    <source>
        <strain>Brown Norway</strain>
    </source>
</reference>
<reference key="2">
    <citation type="submission" date="2005-07" db="EMBL/GenBank/DDBJ databases">
        <authorList>
            <person name="Mural R.J."/>
            <person name="Adams M.D."/>
            <person name="Myers E.W."/>
            <person name="Smith H.O."/>
            <person name="Venter J.C."/>
        </authorList>
    </citation>
    <scope>NUCLEOTIDE SEQUENCE [LARGE SCALE GENOMIC DNA]</scope>
    <source>
        <strain>Brown Norway</strain>
    </source>
</reference>
<reference key="3">
    <citation type="journal article" date="2012" name="Neuron">
        <title>FLRT proteins are endogenous latrophilin ligands and regulate excitatory synapse development.</title>
        <authorList>
            <person name="O'Sullivan M.L."/>
            <person name="de Wit J."/>
            <person name="Savas J.N."/>
            <person name="Comoletti D."/>
            <person name="Otto-Hitt S."/>
            <person name="Yates J.R. III"/>
            <person name="Ghosh A."/>
        </authorList>
    </citation>
    <scope>INTERACTION WITH ADGRL3</scope>
    <scope>SUBCELLULAR LOCATION</scope>
    <scope>IDENTIFICATION BY MASS SPECTROMETRY</scope>
    <scope>TISSUE SPECIFICITY</scope>
</reference>
<name>FLRT2_RAT</name>
<dbReference type="EMBL" id="AABR07065291">
    <property type="status" value="NOT_ANNOTATED_CDS"/>
    <property type="molecule type" value="Genomic_DNA"/>
</dbReference>
<dbReference type="EMBL" id="CH473982">
    <property type="protein sequence ID" value="EDL81682.1"/>
    <property type="molecule type" value="Genomic_DNA"/>
</dbReference>
<dbReference type="RefSeq" id="NP_001100220.1">
    <property type="nucleotide sequence ID" value="NM_001106750.1"/>
</dbReference>
<dbReference type="RefSeq" id="XP_006240478.1">
    <property type="nucleotide sequence ID" value="XM_006240416.3"/>
</dbReference>
<dbReference type="RefSeq" id="XP_008762982.1">
    <property type="nucleotide sequence ID" value="XM_008764760.2"/>
</dbReference>
<dbReference type="RefSeq" id="XP_038967988.1">
    <property type="nucleotide sequence ID" value="XM_039112060.2"/>
</dbReference>
<dbReference type="RefSeq" id="XP_063117828.1">
    <property type="nucleotide sequence ID" value="XM_063261758.1"/>
</dbReference>
<dbReference type="SMR" id="D3ZTV3"/>
<dbReference type="FunCoup" id="D3ZTV3">
    <property type="interactions" value="650"/>
</dbReference>
<dbReference type="STRING" id="10116.ENSRNOP00000004955"/>
<dbReference type="GlyCosmos" id="D3ZTV3">
    <property type="glycosylation" value="1 site, No reported glycans"/>
</dbReference>
<dbReference type="GlyGen" id="D3ZTV3">
    <property type="glycosylation" value="1 site"/>
</dbReference>
<dbReference type="PhosphoSitePlus" id="D3ZTV3"/>
<dbReference type="PaxDb" id="10116-ENSRNOP00000004955"/>
<dbReference type="Ensembl" id="ENSRNOT00000004955.5">
    <property type="protein sequence ID" value="ENSRNOP00000004955.4"/>
    <property type="gene ID" value="ENSRNOG00000003732.5"/>
</dbReference>
<dbReference type="Ensembl" id="ENSRNOT00000108960.1">
    <property type="protein sequence ID" value="ENSRNOP00000076725.1"/>
    <property type="gene ID" value="ENSRNOG00000003732.5"/>
</dbReference>
<dbReference type="Ensembl" id="ENSRNOT00000113363.1">
    <property type="protein sequence ID" value="ENSRNOP00000083901.1"/>
    <property type="gene ID" value="ENSRNOG00000003732.5"/>
</dbReference>
<dbReference type="Ensembl" id="ENSRNOT00000120043.1">
    <property type="protein sequence ID" value="ENSRNOP00000079728.1"/>
    <property type="gene ID" value="ENSRNOG00000003732.5"/>
</dbReference>
<dbReference type="GeneID" id="299236"/>
<dbReference type="KEGG" id="rno:299236"/>
<dbReference type="UCSC" id="RGD:1308574">
    <property type="organism name" value="rat"/>
</dbReference>
<dbReference type="AGR" id="RGD:1308574"/>
<dbReference type="CTD" id="23768"/>
<dbReference type="RGD" id="1308574">
    <property type="gene designation" value="Flrt2"/>
</dbReference>
<dbReference type="eggNOG" id="ENOG502QSJU">
    <property type="taxonomic scope" value="Eukaryota"/>
</dbReference>
<dbReference type="GeneTree" id="ENSGT00940000158937"/>
<dbReference type="HOGENOM" id="CLU_027624_0_0_1"/>
<dbReference type="InParanoid" id="D3ZTV3"/>
<dbReference type="OMA" id="KADFRIQ"/>
<dbReference type="OrthoDB" id="676979at2759"/>
<dbReference type="PhylomeDB" id="D3ZTV3"/>
<dbReference type="TreeFam" id="TF315838"/>
<dbReference type="Reactome" id="R-RNO-5654687">
    <property type="pathway name" value="Downstream signaling of activated FGFR1"/>
</dbReference>
<dbReference type="PRO" id="PR:D3ZTV3"/>
<dbReference type="Proteomes" id="UP000002494">
    <property type="component" value="Chromosome 6"/>
</dbReference>
<dbReference type="Proteomes" id="UP000234681">
    <property type="component" value="Chromosome 6"/>
</dbReference>
<dbReference type="Bgee" id="ENSRNOG00000003732">
    <property type="expression patterns" value="Expressed in frontal cortex and 15 other cell types or tissues"/>
</dbReference>
<dbReference type="GO" id="GO:0005911">
    <property type="term" value="C:cell-cell junction"/>
    <property type="evidence" value="ECO:0000250"/>
    <property type="project" value="UniProtKB"/>
</dbReference>
<dbReference type="GO" id="GO:0005789">
    <property type="term" value="C:endoplasmic reticulum membrane"/>
    <property type="evidence" value="ECO:0007669"/>
    <property type="project" value="UniProtKB-SubCell"/>
</dbReference>
<dbReference type="GO" id="GO:0005615">
    <property type="term" value="C:extracellular space"/>
    <property type="evidence" value="ECO:0000266"/>
    <property type="project" value="RGD"/>
</dbReference>
<dbReference type="GO" id="GO:0005925">
    <property type="term" value="C:focal adhesion"/>
    <property type="evidence" value="ECO:0000266"/>
    <property type="project" value="RGD"/>
</dbReference>
<dbReference type="GO" id="GO:0098978">
    <property type="term" value="C:glutamatergic synapse"/>
    <property type="evidence" value="ECO:0000314"/>
    <property type="project" value="SynGO"/>
</dbReference>
<dbReference type="GO" id="GO:0043005">
    <property type="term" value="C:neuron projection"/>
    <property type="evidence" value="ECO:0007669"/>
    <property type="project" value="UniProtKB-KW"/>
</dbReference>
<dbReference type="GO" id="GO:0005886">
    <property type="term" value="C:plasma membrane"/>
    <property type="evidence" value="ECO:0000250"/>
    <property type="project" value="UniProtKB"/>
</dbReference>
<dbReference type="GO" id="GO:0045211">
    <property type="term" value="C:postsynaptic membrane"/>
    <property type="evidence" value="ECO:0000314"/>
    <property type="project" value="SynGO"/>
</dbReference>
<dbReference type="GO" id="GO:0042734">
    <property type="term" value="C:presynaptic membrane"/>
    <property type="evidence" value="ECO:0000266"/>
    <property type="project" value="RGD"/>
</dbReference>
<dbReference type="GO" id="GO:0045499">
    <property type="term" value="F:chemorepellent activity"/>
    <property type="evidence" value="ECO:0000266"/>
    <property type="project" value="RGD"/>
</dbReference>
<dbReference type="GO" id="GO:0005104">
    <property type="term" value="F:fibroblast growth factor receptor binding"/>
    <property type="evidence" value="ECO:0000266"/>
    <property type="project" value="RGD"/>
</dbReference>
<dbReference type="GO" id="GO:0007411">
    <property type="term" value="P:axon guidance"/>
    <property type="evidence" value="ECO:0000266"/>
    <property type="project" value="RGD"/>
</dbReference>
<dbReference type="GO" id="GO:0071711">
    <property type="term" value="P:basement membrane organization"/>
    <property type="evidence" value="ECO:0000250"/>
    <property type="project" value="UniProtKB"/>
</dbReference>
<dbReference type="GO" id="GO:0061343">
    <property type="term" value="P:cell adhesion involved in heart morphogenesis"/>
    <property type="evidence" value="ECO:0000250"/>
    <property type="project" value="UniProtKB"/>
</dbReference>
<dbReference type="GO" id="GO:0008543">
    <property type="term" value="P:fibroblast growth factor receptor signaling pathway"/>
    <property type="evidence" value="ECO:0000250"/>
    <property type="project" value="UniProtKB"/>
</dbReference>
<dbReference type="GO" id="GO:0003007">
    <property type="term" value="P:heart morphogenesis"/>
    <property type="evidence" value="ECO:0000250"/>
    <property type="project" value="UniProtKB"/>
</dbReference>
<dbReference type="GO" id="GO:0051965">
    <property type="term" value="P:positive regulation of synapse assembly"/>
    <property type="evidence" value="ECO:0000266"/>
    <property type="project" value="RGD"/>
</dbReference>
<dbReference type="GO" id="GO:2001222">
    <property type="term" value="P:regulation of neuron migration"/>
    <property type="evidence" value="ECO:0000266"/>
    <property type="project" value="RGD"/>
</dbReference>
<dbReference type="GO" id="GO:0150052">
    <property type="term" value="P:regulation of postsynapse assembly"/>
    <property type="evidence" value="ECO:0000314"/>
    <property type="project" value="SynGO"/>
</dbReference>
<dbReference type="FunFam" id="3.80.10.10:FF:000043">
    <property type="entry name" value="Leucine-rich repeat transmembrane protein FLRT3"/>
    <property type="match status" value="1"/>
</dbReference>
<dbReference type="Gene3D" id="2.60.40.10">
    <property type="entry name" value="Immunoglobulins"/>
    <property type="match status" value="1"/>
</dbReference>
<dbReference type="Gene3D" id="3.80.10.10">
    <property type="entry name" value="Ribonuclease Inhibitor"/>
    <property type="match status" value="1"/>
</dbReference>
<dbReference type="InterPro" id="IPR000483">
    <property type="entry name" value="Cys-rich_flank_reg_C"/>
</dbReference>
<dbReference type="InterPro" id="IPR003961">
    <property type="entry name" value="FN3_dom"/>
</dbReference>
<dbReference type="InterPro" id="IPR036116">
    <property type="entry name" value="FN3_sf"/>
</dbReference>
<dbReference type="InterPro" id="IPR013783">
    <property type="entry name" value="Ig-like_fold"/>
</dbReference>
<dbReference type="InterPro" id="IPR001611">
    <property type="entry name" value="Leu-rich_rpt"/>
</dbReference>
<dbReference type="InterPro" id="IPR003591">
    <property type="entry name" value="Leu-rich_rpt_typical-subtyp"/>
</dbReference>
<dbReference type="InterPro" id="IPR032675">
    <property type="entry name" value="LRR_dom_sf"/>
</dbReference>
<dbReference type="InterPro" id="IPR000372">
    <property type="entry name" value="LRRNT"/>
</dbReference>
<dbReference type="InterPro" id="IPR050333">
    <property type="entry name" value="SLRP"/>
</dbReference>
<dbReference type="PANTHER" id="PTHR45712">
    <property type="entry name" value="AGAP008170-PA"/>
    <property type="match status" value="1"/>
</dbReference>
<dbReference type="PANTHER" id="PTHR45712:SF16">
    <property type="entry name" value="LEUCINE-RICH REPEAT TRANSMEMBRANE PROTEIN FLRT2"/>
    <property type="match status" value="1"/>
</dbReference>
<dbReference type="Pfam" id="PF13855">
    <property type="entry name" value="LRR_8"/>
    <property type="match status" value="3"/>
</dbReference>
<dbReference type="Pfam" id="PF01463">
    <property type="entry name" value="LRRCT"/>
    <property type="match status" value="1"/>
</dbReference>
<dbReference type="SMART" id="SM00369">
    <property type="entry name" value="LRR_TYP"/>
    <property type="match status" value="7"/>
</dbReference>
<dbReference type="SMART" id="SM00082">
    <property type="entry name" value="LRRCT"/>
    <property type="match status" value="1"/>
</dbReference>
<dbReference type="SMART" id="SM00013">
    <property type="entry name" value="LRRNT"/>
    <property type="match status" value="1"/>
</dbReference>
<dbReference type="SUPFAM" id="SSF49265">
    <property type="entry name" value="Fibronectin type III"/>
    <property type="match status" value="1"/>
</dbReference>
<dbReference type="SUPFAM" id="SSF52058">
    <property type="entry name" value="L domain-like"/>
    <property type="match status" value="1"/>
</dbReference>
<dbReference type="PROSITE" id="PS50853">
    <property type="entry name" value="FN3"/>
    <property type="match status" value="1"/>
</dbReference>
<feature type="signal peptide" evidence="3">
    <location>
        <begin position="1"/>
        <end position="35"/>
    </location>
</feature>
<feature type="chain" id="PRO_0000434524" description="Leucine-rich repeat transmembrane protein FLRT2">
    <location>
        <begin position="36"/>
        <end position="660"/>
    </location>
</feature>
<feature type="topological domain" description="Extracellular" evidence="7">
    <location>
        <begin position="36"/>
        <end position="540"/>
    </location>
</feature>
<feature type="transmembrane region" description="Helical" evidence="3">
    <location>
        <begin position="541"/>
        <end position="561"/>
    </location>
</feature>
<feature type="topological domain" description="Cytoplasmic" evidence="7">
    <location>
        <begin position="562"/>
        <end position="660"/>
    </location>
</feature>
<feature type="domain" description="LRRNT" evidence="3">
    <location>
        <begin position="36"/>
        <end position="67"/>
    </location>
</feature>
<feature type="repeat" description="LRR 1" evidence="3">
    <location>
        <begin position="62"/>
        <end position="87"/>
    </location>
</feature>
<feature type="repeat" description="LRR 2" evidence="3">
    <location>
        <begin position="88"/>
        <end position="108"/>
    </location>
</feature>
<feature type="repeat" description="LRR 3" evidence="3">
    <location>
        <begin position="109"/>
        <end position="131"/>
    </location>
</feature>
<feature type="repeat" description="LRR 4" evidence="3">
    <location>
        <begin position="132"/>
        <end position="157"/>
    </location>
</feature>
<feature type="repeat" description="LRR 5" evidence="3">
    <location>
        <begin position="159"/>
        <end position="181"/>
    </location>
</feature>
<feature type="repeat" description="LRR 6" evidence="3">
    <location>
        <begin position="183"/>
        <end position="202"/>
    </location>
</feature>
<feature type="repeat" description="LRR 7" evidence="3">
    <location>
        <begin position="203"/>
        <end position="228"/>
    </location>
</feature>
<feature type="repeat" description="LRR 8" evidence="3">
    <location>
        <begin position="229"/>
        <end position="251"/>
    </location>
</feature>
<feature type="repeat" description="LRR 9" evidence="3">
    <location>
        <begin position="252"/>
        <end position="274"/>
    </location>
</feature>
<feature type="repeat" description="LRR 10" evidence="3">
    <location>
        <begin position="275"/>
        <end position="298"/>
    </location>
</feature>
<feature type="domain" description="LRRCT" evidence="3">
    <location>
        <begin position="338"/>
        <end position="361"/>
    </location>
</feature>
<feature type="domain" description="Fibronectin type-III" evidence="4">
    <location>
        <begin position="419"/>
        <end position="517"/>
    </location>
</feature>
<feature type="region of interest" description="Disordered" evidence="5">
    <location>
        <begin position="372"/>
        <end position="413"/>
    </location>
</feature>
<feature type="compositionally biased region" description="Low complexity" evidence="5">
    <location>
        <begin position="372"/>
        <end position="396"/>
    </location>
</feature>
<feature type="glycosylation site" description="N-linked (GlcNAc...) asparagine" evidence="3">
    <location>
        <position position="202"/>
    </location>
</feature>
<feature type="disulfide bond" evidence="1">
    <location>
        <begin position="36"/>
        <end position="42"/>
    </location>
</feature>
<feature type="disulfide bond" evidence="1">
    <location>
        <begin position="40"/>
        <end position="49"/>
    </location>
</feature>
<feature type="disulfide bond" evidence="1">
    <location>
        <begin position="314"/>
        <end position="339"/>
    </location>
</feature>
<feature type="disulfide bond" evidence="2">
    <location>
        <begin position="316"/>
        <end position="360"/>
    </location>
</feature>
<organism evidence="8">
    <name type="scientific">Rattus norvegicus</name>
    <name type="common">Rat</name>
    <dbReference type="NCBI Taxonomy" id="10116"/>
    <lineage>
        <taxon>Eukaryota</taxon>
        <taxon>Metazoa</taxon>
        <taxon>Chordata</taxon>
        <taxon>Craniata</taxon>
        <taxon>Vertebrata</taxon>
        <taxon>Euteleostomi</taxon>
        <taxon>Mammalia</taxon>
        <taxon>Eutheria</taxon>
        <taxon>Euarchontoglires</taxon>
        <taxon>Glires</taxon>
        <taxon>Rodentia</taxon>
        <taxon>Myomorpha</taxon>
        <taxon>Muroidea</taxon>
        <taxon>Muridae</taxon>
        <taxon>Murinae</taxon>
        <taxon>Rattus</taxon>
    </lineage>
</organism>
<gene>
    <name evidence="9" type="primary">Flrt2</name>
</gene>
<protein>
    <recommendedName>
        <fullName evidence="7">Leucine-rich repeat transmembrane protein FLRT2</fullName>
    </recommendedName>
    <alternativeName>
        <fullName evidence="7">Fibronectin-like domain-containing leucine-rich transmembrane protein 2</fullName>
    </alternativeName>
</protein>
<evidence type="ECO:0000250" key="1">
    <source>
        <dbReference type="UniProtKB" id="Q8BGT1"/>
    </source>
</evidence>
<evidence type="ECO:0000250" key="2">
    <source>
        <dbReference type="UniProtKB" id="Q8BLU0"/>
    </source>
</evidence>
<evidence type="ECO:0000255" key="3"/>
<evidence type="ECO:0000255" key="4">
    <source>
        <dbReference type="PROSITE-ProRule" id="PRU00316"/>
    </source>
</evidence>
<evidence type="ECO:0000256" key="5">
    <source>
        <dbReference type="SAM" id="MobiDB-lite"/>
    </source>
</evidence>
<evidence type="ECO:0000269" key="6">
    <source>
    </source>
</evidence>
<evidence type="ECO:0000305" key="7"/>
<evidence type="ECO:0000312" key="8">
    <source>
        <dbReference type="Proteomes" id="UP000002494"/>
    </source>
</evidence>
<evidence type="ECO:0000312" key="9">
    <source>
        <dbReference type="RGD" id="1308574"/>
    </source>
</evidence>